<protein>
    <recommendedName>
        <fullName evidence="1">Anaerobic nitric oxide reductase flavorubredoxin</fullName>
        <shortName evidence="1">FlRd</shortName>
        <shortName evidence="1">FlavoRb</shortName>
    </recommendedName>
</protein>
<dbReference type="EMBL" id="CP001657">
    <property type="protein sequence ID" value="ACT11838.1"/>
    <property type="molecule type" value="Genomic_DNA"/>
</dbReference>
<dbReference type="RefSeq" id="WP_012773479.1">
    <property type="nucleotide sequence ID" value="NC_012917.1"/>
</dbReference>
<dbReference type="SMR" id="C6D9Q2"/>
<dbReference type="STRING" id="561230.PC1_0784"/>
<dbReference type="KEGG" id="pct:PC1_0784"/>
<dbReference type="eggNOG" id="COG0426">
    <property type="taxonomic scope" value="Bacteria"/>
</dbReference>
<dbReference type="eggNOG" id="COG1773">
    <property type="taxonomic scope" value="Bacteria"/>
</dbReference>
<dbReference type="HOGENOM" id="CLU_017490_0_1_6"/>
<dbReference type="OrthoDB" id="9800607at2"/>
<dbReference type="UniPathway" id="UPA00638"/>
<dbReference type="Proteomes" id="UP000002736">
    <property type="component" value="Chromosome"/>
</dbReference>
<dbReference type="GO" id="GO:0005737">
    <property type="term" value="C:cytoplasm"/>
    <property type="evidence" value="ECO:0007669"/>
    <property type="project" value="UniProtKB-SubCell"/>
</dbReference>
<dbReference type="GO" id="GO:0009055">
    <property type="term" value="F:electron transfer activity"/>
    <property type="evidence" value="ECO:0007669"/>
    <property type="project" value="UniProtKB-UniRule"/>
</dbReference>
<dbReference type="GO" id="GO:0010181">
    <property type="term" value="F:FMN binding"/>
    <property type="evidence" value="ECO:0007669"/>
    <property type="project" value="InterPro"/>
</dbReference>
<dbReference type="GO" id="GO:0005506">
    <property type="term" value="F:iron ion binding"/>
    <property type="evidence" value="ECO:0007669"/>
    <property type="project" value="InterPro"/>
</dbReference>
<dbReference type="GO" id="GO:0016966">
    <property type="term" value="F:nitric oxide reductase activity"/>
    <property type="evidence" value="ECO:0007669"/>
    <property type="project" value="InterPro"/>
</dbReference>
<dbReference type="CDD" id="cd07709">
    <property type="entry name" value="flavodiiron_proteins_MBL-fold"/>
    <property type="match status" value="1"/>
</dbReference>
<dbReference type="CDD" id="cd00730">
    <property type="entry name" value="rubredoxin"/>
    <property type="match status" value="1"/>
</dbReference>
<dbReference type="Gene3D" id="2.20.28.10">
    <property type="match status" value="1"/>
</dbReference>
<dbReference type="Gene3D" id="3.40.50.360">
    <property type="match status" value="1"/>
</dbReference>
<dbReference type="Gene3D" id="3.60.15.10">
    <property type="entry name" value="Ribonuclease Z/Hydroxyacylglutathione hydrolase-like"/>
    <property type="match status" value="1"/>
</dbReference>
<dbReference type="HAMAP" id="MF_01312">
    <property type="entry name" value="NorV"/>
    <property type="match status" value="1"/>
</dbReference>
<dbReference type="InterPro" id="IPR023957">
    <property type="entry name" value="Anaer_NO_rdtase_flvorubredoxin"/>
</dbReference>
<dbReference type="InterPro" id="IPR008254">
    <property type="entry name" value="Flavodoxin/NO_synth"/>
</dbReference>
<dbReference type="InterPro" id="IPR029039">
    <property type="entry name" value="Flavoprotein-like_sf"/>
</dbReference>
<dbReference type="InterPro" id="IPR001279">
    <property type="entry name" value="Metallo-B-lactamas"/>
</dbReference>
<dbReference type="InterPro" id="IPR045761">
    <property type="entry name" value="ODP_dom"/>
</dbReference>
<dbReference type="InterPro" id="IPR036866">
    <property type="entry name" value="RibonucZ/Hydroxyglut_hydro"/>
</dbReference>
<dbReference type="InterPro" id="IPR024934">
    <property type="entry name" value="Rubredoxin-like_dom"/>
</dbReference>
<dbReference type="InterPro" id="IPR024935">
    <property type="entry name" value="Rubredoxin_dom"/>
</dbReference>
<dbReference type="NCBIfam" id="NF003954">
    <property type="entry name" value="PRK05452.1"/>
    <property type="match status" value="1"/>
</dbReference>
<dbReference type="PANTHER" id="PTHR43717">
    <property type="entry name" value="ANAEROBIC NITRIC OXIDE REDUCTASE FLAVORUBREDOXIN"/>
    <property type="match status" value="1"/>
</dbReference>
<dbReference type="PANTHER" id="PTHR43717:SF1">
    <property type="entry name" value="ANAEROBIC NITRIC OXIDE REDUCTASE FLAVORUBREDOXIN"/>
    <property type="match status" value="1"/>
</dbReference>
<dbReference type="Pfam" id="PF00258">
    <property type="entry name" value="Flavodoxin_1"/>
    <property type="match status" value="1"/>
</dbReference>
<dbReference type="Pfam" id="PF19583">
    <property type="entry name" value="ODP"/>
    <property type="match status" value="1"/>
</dbReference>
<dbReference type="Pfam" id="PF00301">
    <property type="entry name" value="Rubredoxin"/>
    <property type="match status" value="1"/>
</dbReference>
<dbReference type="PRINTS" id="PR00163">
    <property type="entry name" value="RUBREDOXIN"/>
</dbReference>
<dbReference type="SMART" id="SM00849">
    <property type="entry name" value="Lactamase_B"/>
    <property type="match status" value="1"/>
</dbReference>
<dbReference type="SUPFAM" id="SSF52218">
    <property type="entry name" value="Flavoproteins"/>
    <property type="match status" value="1"/>
</dbReference>
<dbReference type="SUPFAM" id="SSF56281">
    <property type="entry name" value="Metallo-hydrolase/oxidoreductase"/>
    <property type="match status" value="1"/>
</dbReference>
<dbReference type="SUPFAM" id="SSF57802">
    <property type="entry name" value="Rubredoxin-like"/>
    <property type="match status" value="1"/>
</dbReference>
<dbReference type="PROSITE" id="PS50902">
    <property type="entry name" value="FLAVODOXIN_LIKE"/>
    <property type="match status" value="1"/>
</dbReference>
<dbReference type="PROSITE" id="PS50903">
    <property type="entry name" value="RUBREDOXIN_LIKE"/>
    <property type="match status" value="1"/>
</dbReference>
<reference key="1">
    <citation type="submission" date="2009-07" db="EMBL/GenBank/DDBJ databases">
        <title>Complete sequence of Pectobacterium carotovorum subsp. carotovorum PC1.</title>
        <authorList>
            <consortium name="US DOE Joint Genome Institute"/>
            <person name="Lucas S."/>
            <person name="Copeland A."/>
            <person name="Lapidus A."/>
            <person name="Glavina del Rio T."/>
            <person name="Tice H."/>
            <person name="Bruce D."/>
            <person name="Goodwin L."/>
            <person name="Pitluck S."/>
            <person name="Munk A.C."/>
            <person name="Brettin T."/>
            <person name="Detter J.C."/>
            <person name="Han C."/>
            <person name="Tapia R."/>
            <person name="Larimer F."/>
            <person name="Land M."/>
            <person name="Hauser L."/>
            <person name="Kyrpides N."/>
            <person name="Mikhailova N."/>
            <person name="Balakrishnan V."/>
            <person name="Glasner J."/>
            <person name="Perna N.T."/>
        </authorList>
    </citation>
    <scope>NUCLEOTIDE SEQUENCE [LARGE SCALE GENOMIC DNA]</scope>
    <source>
        <strain>PC1</strain>
    </source>
</reference>
<gene>
    <name evidence="1" type="primary">norV</name>
    <name evidence="1" type="synonym">flrD</name>
    <name type="ordered locus">PC1_0784</name>
</gene>
<accession>C6D9Q2</accession>
<name>NORV_PECCP</name>
<keyword id="KW-0963">Cytoplasm</keyword>
<keyword id="KW-0249">Electron transport</keyword>
<keyword id="KW-0285">Flavoprotein</keyword>
<keyword id="KW-0288">FMN</keyword>
<keyword id="KW-0408">Iron</keyword>
<keyword id="KW-0479">Metal-binding</keyword>
<keyword id="KW-0560">Oxidoreductase</keyword>
<keyword id="KW-0813">Transport</keyword>
<organism>
    <name type="scientific">Pectobacterium carotovorum subsp. carotovorum (strain PC1)</name>
    <dbReference type="NCBI Taxonomy" id="561230"/>
    <lineage>
        <taxon>Bacteria</taxon>
        <taxon>Pseudomonadati</taxon>
        <taxon>Pseudomonadota</taxon>
        <taxon>Gammaproteobacteria</taxon>
        <taxon>Enterobacterales</taxon>
        <taxon>Pectobacteriaceae</taxon>
        <taxon>Pectobacterium</taxon>
    </lineage>
</organism>
<feature type="chain" id="PRO_1000214380" description="Anaerobic nitric oxide reductase flavorubredoxin">
    <location>
        <begin position="1"/>
        <end position="503"/>
    </location>
</feature>
<feature type="domain" description="Flavodoxin-like" evidence="1">
    <location>
        <begin position="254"/>
        <end position="393"/>
    </location>
</feature>
<feature type="domain" description="Rubredoxin-like" evidence="1">
    <location>
        <begin position="451"/>
        <end position="502"/>
    </location>
</feature>
<feature type="region of interest" description="Zinc metallo-hydrolase">
    <location>
        <begin position="30"/>
        <end position="210"/>
    </location>
</feature>
<feature type="binding site" evidence="1">
    <location>
        <position position="79"/>
    </location>
    <ligand>
        <name>Fe cation</name>
        <dbReference type="ChEBI" id="CHEBI:24875"/>
        <label>1</label>
    </ligand>
</feature>
<feature type="binding site" evidence="1">
    <location>
        <position position="81"/>
    </location>
    <ligand>
        <name>Fe cation</name>
        <dbReference type="ChEBI" id="CHEBI:24875"/>
        <label>1</label>
    </ligand>
</feature>
<feature type="binding site" evidence="1">
    <location>
        <position position="83"/>
    </location>
    <ligand>
        <name>Fe cation</name>
        <dbReference type="ChEBI" id="CHEBI:24875"/>
        <label>2</label>
    </ligand>
</feature>
<feature type="binding site" evidence="1">
    <location>
        <position position="147"/>
    </location>
    <ligand>
        <name>Fe cation</name>
        <dbReference type="ChEBI" id="CHEBI:24875"/>
        <label>1</label>
    </ligand>
</feature>
<feature type="binding site" evidence="1">
    <location>
        <position position="166"/>
    </location>
    <ligand>
        <name>Fe cation</name>
        <dbReference type="ChEBI" id="CHEBI:24875"/>
        <label>1</label>
    </ligand>
</feature>
<feature type="binding site" evidence="1">
    <location>
        <position position="166"/>
    </location>
    <ligand>
        <name>Fe cation</name>
        <dbReference type="ChEBI" id="CHEBI:24875"/>
        <label>2</label>
    </ligand>
</feature>
<feature type="binding site" evidence="1">
    <location>
        <position position="227"/>
    </location>
    <ligand>
        <name>Fe cation</name>
        <dbReference type="ChEBI" id="CHEBI:24875"/>
        <label>2</label>
    </ligand>
</feature>
<feature type="binding site" evidence="1">
    <location>
        <begin position="260"/>
        <end position="264"/>
    </location>
    <ligand>
        <name>FMN</name>
        <dbReference type="ChEBI" id="CHEBI:58210"/>
    </ligand>
</feature>
<feature type="binding site" evidence="1">
    <location>
        <begin position="342"/>
        <end position="369"/>
    </location>
    <ligand>
        <name>FMN</name>
        <dbReference type="ChEBI" id="CHEBI:58210"/>
    </ligand>
</feature>
<feature type="binding site" evidence="1">
    <location>
        <position position="456"/>
    </location>
    <ligand>
        <name>Fe cation</name>
        <dbReference type="ChEBI" id="CHEBI:24875"/>
        <label>3</label>
    </ligand>
</feature>
<feature type="binding site" evidence="1">
    <location>
        <position position="459"/>
    </location>
    <ligand>
        <name>Fe cation</name>
        <dbReference type="ChEBI" id="CHEBI:24875"/>
        <label>3</label>
    </ligand>
</feature>
<feature type="binding site" evidence="1">
    <location>
        <position position="489"/>
    </location>
    <ligand>
        <name>Fe cation</name>
        <dbReference type="ChEBI" id="CHEBI:24875"/>
        <label>3</label>
    </ligand>
</feature>
<feature type="binding site" evidence="1">
    <location>
        <position position="492"/>
    </location>
    <ligand>
        <name>Fe cation</name>
        <dbReference type="ChEBI" id="CHEBI:24875"/>
        <label>3</label>
    </ligand>
</feature>
<evidence type="ECO:0000255" key="1">
    <source>
        <dbReference type="HAMAP-Rule" id="MF_01312"/>
    </source>
</evidence>
<proteinExistence type="inferred from homology"/>
<sequence>MAIHVKNNIHWVGQRDWEVRDFHGTEYKTLQGSSYNSYLIREEKTVLIDTVDHKFSRDFVQNLMAEVDLNTIDYIVINHAEEDHAGALSELMARIPNTPIYCTHNAIDSITGHHHHPEWHFHTVKTGDTLDIGNGKQLIFIETPMLHWPDSMMTYMTEDAVLFSNDAFGQHYCDEHLFNDEVDQTELFEQCQRYFANILTPFSRLVTAKIHEVLGFNLPLSMVATSHGVVWRDDPAQIIHLYLKWADSYQEDRITLFYDTMSNNTRMMADAIAQGINDVDPGVAVKIYNVARHDKNEILTQVFRSKGVLVGSSTMNNVMMPKVAAMLEEITGLRFQNKKASAFGSYGWNGGAVDRIQTRLMDAGFETTLALKTKWRPDGSALEICREHGREIARQWALHPLDDTPARRVISPVKQTTVAPQSASAPAESACGCSEVAAPQSTAQPAAQSGNGCMQCSVCQWIYDPALGEPMQDVTPGTMWSDVPDSFLCPECGLGKDVFNPIR</sequence>
<comment type="function">
    <text evidence="1">Anaerobic nitric oxide reductase; uses NADH to detoxify nitric oxide (NO), protecting several 4Fe-4S NO-sensitive enzymes. Has at least 2 reductase partners, only one of which (NorW, flavorubredoxin reductase) has been identified. NO probably binds to the di-iron center; electrons enter from the NorW at rubredoxin and are transferred sequentially to the FMN center and the di-iron center. Also able to function as an aerobic oxygen reductase.</text>
</comment>
<comment type="cofactor">
    <cofactor evidence="1">
        <name>Fe cation</name>
        <dbReference type="ChEBI" id="CHEBI:24875"/>
    </cofactor>
    <text evidence="1">Binds 3 Fe cations per monomer.</text>
</comment>
<comment type="cofactor">
    <cofactor evidence="1">
        <name>FMN</name>
        <dbReference type="ChEBI" id="CHEBI:58210"/>
    </cofactor>
    <text evidence="1">Binds 1 FMN per monomer.</text>
</comment>
<comment type="pathway">
    <text evidence="1">Nitrogen metabolism; nitric oxide reduction.</text>
</comment>
<comment type="subunit">
    <text evidence="1">Homotetramer.</text>
</comment>
<comment type="subcellular location">
    <subcellularLocation>
        <location evidence="1">Cytoplasm</location>
    </subcellularLocation>
</comment>
<comment type="similarity">
    <text evidence="1">In the N-terminal section; belongs to the zinc metallo-hydrolase group 3 family.</text>
</comment>